<name>RL31_MYCTA</name>
<gene>
    <name evidence="1" type="primary">rpmE</name>
    <name type="ordered locus">MRA_1306</name>
</gene>
<organism>
    <name type="scientific">Mycobacterium tuberculosis (strain ATCC 25177 / H37Ra)</name>
    <dbReference type="NCBI Taxonomy" id="419947"/>
    <lineage>
        <taxon>Bacteria</taxon>
        <taxon>Bacillati</taxon>
        <taxon>Actinomycetota</taxon>
        <taxon>Actinomycetes</taxon>
        <taxon>Mycobacteriales</taxon>
        <taxon>Mycobacteriaceae</taxon>
        <taxon>Mycobacterium</taxon>
        <taxon>Mycobacterium tuberculosis complex</taxon>
    </lineage>
</organism>
<evidence type="ECO:0000255" key="1">
    <source>
        <dbReference type="HAMAP-Rule" id="MF_00501"/>
    </source>
</evidence>
<evidence type="ECO:0000305" key="2"/>
<evidence type="ECO:0007829" key="3">
    <source>
        <dbReference type="PDB" id="7F0D"/>
    </source>
</evidence>
<reference key="1">
    <citation type="journal article" date="2008" name="PLoS ONE">
        <title>Genetic basis of virulence attenuation revealed by comparative genomic analysis of Mycobacterium tuberculosis strain H37Ra versus H37Rv.</title>
        <authorList>
            <person name="Zheng H."/>
            <person name="Lu L."/>
            <person name="Wang B."/>
            <person name="Pu S."/>
            <person name="Zhang X."/>
            <person name="Zhu G."/>
            <person name="Shi W."/>
            <person name="Zhang L."/>
            <person name="Wang H."/>
            <person name="Wang S."/>
            <person name="Zhao G."/>
            <person name="Zhang Y."/>
        </authorList>
    </citation>
    <scope>NUCLEOTIDE SEQUENCE [LARGE SCALE GENOMIC DNA]</scope>
    <source>
        <strain>ATCC 25177 / H37Ra</strain>
    </source>
</reference>
<proteinExistence type="evidence at protein level"/>
<dbReference type="EMBL" id="CP000611">
    <property type="protein sequence ID" value="ABQ73047.1"/>
    <property type="molecule type" value="Genomic_DNA"/>
</dbReference>
<dbReference type="RefSeq" id="WP_003406668.1">
    <property type="nucleotide sequence ID" value="NZ_CP016972.1"/>
</dbReference>
<dbReference type="PDB" id="7F0D">
    <property type="method" value="EM"/>
    <property type="resolution" value="3.30 A"/>
    <property type="chains" value="6=1-80"/>
</dbReference>
<dbReference type="PDBsum" id="7F0D"/>
<dbReference type="SMR" id="A5U1Z7"/>
<dbReference type="GeneID" id="45425272"/>
<dbReference type="KEGG" id="mra:MRA_1306"/>
<dbReference type="eggNOG" id="COG0254">
    <property type="taxonomic scope" value="Bacteria"/>
</dbReference>
<dbReference type="HOGENOM" id="CLU_114306_4_0_11"/>
<dbReference type="Proteomes" id="UP000001988">
    <property type="component" value="Chromosome"/>
</dbReference>
<dbReference type="GO" id="GO:1990904">
    <property type="term" value="C:ribonucleoprotein complex"/>
    <property type="evidence" value="ECO:0007669"/>
    <property type="project" value="UniProtKB-KW"/>
</dbReference>
<dbReference type="GO" id="GO:0005840">
    <property type="term" value="C:ribosome"/>
    <property type="evidence" value="ECO:0007669"/>
    <property type="project" value="UniProtKB-KW"/>
</dbReference>
<dbReference type="GO" id="GO:0046872">
    <property type="term" value="F:metal ion binding"/>
    <property type="evidence" value="ECO:0007669"/>
    <property type="project" value="UniProtKB-KW"/>
</dbReference>
<dbReference type="GO" id="GO:0019843">
    <property type="term" value="F:rRNA binding"/>
    <property type="evidence" value="ECO:0007669"/>
    <property type="project" value="UniProtKB-KW"/>
</dbReference>
<dbReference type="GO" id="GO:0003735">
    <property type="term" value="F:structural constituent of ribosome"/>
    <property type="evidence" value="ECO:0007669"/>
    <property type="project" value="InterPro"/>
</dbReference>
<dbReference type="GO" id="GO:0006412">
    <property type="term" value="P:translation"/>
    <property type="evidence" value="ECO:0007669"/>
    <property type="project" value="UniProtKB-UniRule"/>
</dbReference>
<dbReference type="Gene3D" id="4.10.830.30">
    <property type="entry name" value="Ribosomal protein L31"/>
    <property type="match status" value="1"/>
</dbReference>
<dbReference type="HAMAP" id="MF_00501">
    <property type="entry name" value="Ribosomal_bL31_1"/>
    <property type="match status" value="1"/>
</dbReference>
<dbReference type="InterPro" id="IPR034704">
    <property type="entry name" value="Ribosomal_bL28/bL31-like_sf"/>
</dbReference>
<dbReference type="InterPro" id="IPR002150">
    <property type="entry name" value="Ribosomal_bL31"/>
</dbReference>
<dbReference type="InterPro" id="IPR027491">
    <property type="entry name" value="Ribosomal_bL31_A"/>
</dbReference>
<dbReference type="InterPro" id="IPR042105">
    <property type="entry name" value="Ribosomal_bL31_sf"/>
</dbReference>
<dbReference type="NCBIfam" id="TIGR00105">
    <property type="entry name" value="L31"/>
    <property type="match status" value="1"/>
</dbReference>
<dbReference type="NCBIfam" id="NF000612">
    <property type="entry name" value="PRK00019.1"/>
    <property type="match status" value="1"/>
</dbReference>
<dbReference type="NCBIfam" id="NF001809">
    <property type="entry name" value="PRK00528.1"/>
    <property type="match status" value="1"/>
</dbReference>
<dbReference type="PANTHER" id="PTHR33280">
    <property type="entry name" value="50S RIBOSOMAL PROTEIN L31, CHLOROPLASTIC"/>
    <property type="match status" value="1"/>
</dbReference>
<dbReference type="PANTHER" id="PTHR33280:SF1">
    <property type="entry name" value="LARGE RIBOSOMAL SUBUNIT PROTEIN BL31C"/>
    <property type="match status" value="1"/>
</dbReference>
<dbReference type="Pfam" id="PF01197">
    <property type="entry name" value="Ribosomal_L31"/>
    <property type="match status" value="1"/>
</dbReference>
<dbReference type="PRINTS" id="PR01249">
    <property type="entry name" value="RIBOSOMALL31"/>
</dbReference>
<dbReference type="SUPFAM" id="SSF143800">
    <property type="entry name" value="L28p-like"/>
    <property type="match status" value="1"/>
</dbReference>
<dbReference type="PROSITE" id="PS01143">
    <property type="entry name" value="RIBOSOMAL_L31"/>
    <property type="match status" value="1"/>
</dbReference>
<comment type="function">
    <text evidence="1">Binds the 23S rRNA.</text>
</comment>
<comment type="cofactor">
    <cofactor evidence="1">
        <name>Zn(2+)</name>
        <dbReference type="ChEBI" id="CHEBI:29105"/>
    </cofactor>
    <text evidence="1">Binds 1 zinc ion per subunit.</text>
</comment>
<comment type="subunit">
    <text evidence="1">Part of the 50S ribosomal subunit.</text>
</comment>
<comment type="similarity">
    <text evidence="1">Belongs to the bacterial ribosomal protein bL31 family. Type A subfamily.</text>
</comment>
<sequence>MKSDIHPAYEETTVVCGCGNTFQTRSTKPGGRIVVEVCSQCHPFYTGKQKILDSGGRVARFEKRYGKRKVGADKAVSTGK</sequence>
<keyword id="KW-0002">3D-structure</keyword>
<keyword id="KW-0479">Metal-binding</keyword>
<keyword id="KW-1185">Reference proteome</keyword>
<keyword id="KW-0687">Ribonucleoprotein</keyword>
<keyword id="KW-0689">Ribosomal protein</keyword>
<keyword id="KW-0694">RNA-binding</keyword>
<keyword id="KW-0699">rRNA-binding</keyword>
<keyword id="KW-0862">Zinc</keyword>
<protein>
    <recommendedName>
        <fullName evidence="1">Large ribosomal subunit protein bL31</fullName>
    </recommendedName>
    <alternativeName>
        <fullName evidence="2">50S ribosomal protein L31</fullName>
    </alternativeName>
</protein>
<accession>A5U1Z7</accession>
<feature type="chain" id="PRO_1000126670" description="Large ribosomal subunit protein bL31">
    <location>
        <begin position="1"/>
        <end position="80"/>
    </location>
</feature>
<feature type="binding site" evidence="1">
    <location>
        <position position="16"/>
    </location>
    <ligand>
        <name>Zn(2+)</name>
        <dbReference type="ChEBI" id="CHEBI:29105"/>
    </ligand>
</feature>
<feature type="binding site" evidence="1">
    <location>
        <position position="18"/>
    </location>
    <ligand>
        <name>Zn(2+)</name>
        <dbReference type="ChEBI" id="CHEBI:29105"/>
    </ligand>
</feature>
<feature type="binding site" evidence="1">
    <location>
        <position position="38"/>
    </location>
    <ligand>
        <name>Zn(2+)</name>
        <dbReference type="ChEBI" id="CHEBI:29105"/>
    </ligand>
</feature>
<feature type="binding site" evidence="1">
    <location>
        <position position="41"/>
    </location>
    <ligand>
        <name>Zn(2+)</name>
        <dbReference type="ChEBI" id="CHEBI:29105"/>
    </ligand>
</feature>
<feature type="strand" evidence="3">
    <location>
        <begin position="4"/>
        <end position="6"/>
    </location>
</feature>
<feature type="strand" evidence="3">
    <location>
        <begin position="17"/>
        <end position="19"/>
    </location>
</feature>
<feature type="turn" evidence="3">
    <location>
        <begin position="39"/>
        <end position="41"/>
    </location>
</feature>